<name>NPP5_CAEEL</name>
<sequence>MTDLFASGDNSSNSFDDSNDEIARKNETAFKYTTIFHTNLSEKLYHELCALAFGEFDIPQGQISPLMWTRLHEIYSEVEMQTRKLPAGSNYSASSQKYANEAVQIASVLSIYTALAHEYDETVEVSLLSKLVVEDVEFRRIYALLLWSEKAISEQQYEKGLGDKVRKLEGIKSSRINSMMALKRPTFGAANAPKDASLDPDAPGTKEDQALEQMAMNVFFQLIRSGETSKAANLAIDLGMGAIGAQLQLHSMLRNPLDIPLEASKQNFGEYKRSRRAKYYQMTQKLIEQSQGSEDDAYWMLISAIRGNIQPMLKAGKSVIEKVWAYANSAVLARILAAEGAMTQETISTLFNVPLTSKSILDELRSEADRTKEVYILLRVIDDMLNDDIEDLYKFANETVGEFVPNDKNCQVNMLALDIFFHLVAVSYASGFEPNDDGNAVIILGFDDLRARSGTSSHKKMAAFYSRFLPEDMKLPEIVETMKAVDSDEEREILAESLKQSDIDFGRCACTLIEQIRKDDKTKVVTLEEQIDHWHWLLIGGEETALAALEECNRLVRKVMLSTPIDESVIRQIIRKALHFEVPKLLSQAVENEATVLSLITDGTLFEQKPGSQLAINKIEHAALEFYGLCSFVDVNNFMITIALKLGLMFKYTPITDDELSMIGGVKRLDNTTAADWEASLRVRARAEQTLREEVLKKRAAEHNTRVGMVQQHLDTVLPMLRGLVNNIGVRPEYFLSPRANGDPMRVHRKEIQEIRNLFLPQFFILLAQAAVRLDDTTNFNDFFTSFNNDLGLDQEWMVFIKAFYAELNLKVE</sequence>
<organism evidence="5">
    <name type="scientific">Caenorhabditis elegans</name>
    <dbReference type="NCBI Taxonomy" id="6239"/>
    <lineage>
        <taxon>Eukaryota</taxon>
        <taxon>Metazoa</taxon>
        <taxon>Ecdysozoa</taxon>
        <taxon>Nematoda</taxon>
        <taxon>Chromadorea</taxon>
        <taxon>Rhabditida</taxon>
        <taxon>Rhabditina</taxon>
        <taxon>Rhabditomorpha</taxon>
        <taxon>Rhabditoidea</taxon>
        <taxon>Rhabditidae</taxon>
        <taxon>Peloderinae</taxon>
        <taxon>Caenorhabditis</taxon>
    </lineage>
</organism>
<comment type="function">
    <text evidence="3">Involved in kinetochore assembly and chromosome segregation during embryonic mitosis. Required for the localization of the NDC80 complex member him-10, the chromosomal passenger complex component air-2 and nuclear pore complex proteins npp-23 and npp-15 to kinetochores during metaphase. Required for npp-23 localization to the nuclear envelope during interphase. Recruits mdf-1, a component of the spindle assembly checkpoint, to the nuclear envelope. Appears dispensable for the assembly of the nuclear pore complex and for nuclear protein import.</text>
</comment>
<comment type="subunit">
    <text evidence="1 3">Part of the nuclear pore complex (NPC) (By similarity). May interact with mdf-1 (PubMed:22238360).</text>
</comment>
<comment type="subcellular location">
    <subcellularLocation>
        <location evidence="1">Nucleus</location>
        <location evidence="1">Nuclear pore complex</location>
    </subcellularLocation>
    <subcellularLocation>
        <location evidence="3">Chromosome</location>
        <location evidence="3">Centromere</location>
        <location evidence="3">Kinetochore</location>
    </subcellularLocation>
    <subcellularLocation>
        <location evidence="3">Nucleus membrane</location>
        <topology evidence="4">Peripheral membrane protein</topology>
    </subcellularLocation>
    <text evidence="3">Localizes to nuclear membrane periphery during interphase and to kinetochore during mitosis.</text>
</comment>
<comment type="developmental stage">
    <text evidence="2 3">Highly expressed in embryos (at protein level) (PubMed:19167330, PubMed:22238360). Expression decreases rapidly in larvae and becomes restricted to the germline in adults (PubMed:19167330).</text>
</comment>
<comment type="disruption phenotype">
    <text evidence="3">Larval lethality with about 9-12 percent of animals reaching adulthood. The few surviving adults are sterile. About 10 percent embryonic lethality. Reduced nuclear growth in P1 embryonic cell and delayed entry into mitosis. 39 percent reduction in him-10 kinetochore association and 34 percent reduction in air-2 chromatin association during metaphase. Loss of npp-5 localization to kinetochores during metaphase. About 10 percent of mutants have chromosome segregation defects. RNAi-mediated knockdown causes a loss of npp-23 localization to kinetochores and reduced localization to the nuclear envelope in interphase. Also results in the accumulation of spindle assembly checkpoint protein mdf-1 on kinetochores during metaphase and reduced mdf-1 localization to the nuclear envelope. Does not affect the expression levels of nuclear pore complex components npp-10, npp-19 and npp-7 or npp-10, npp-2 and mel-28 localization and appears to be dispensable for pie-1 nuclear import and for nuclear protein exclusion. Embryos transiently exposed to a hypoxic environment develop into infertile adults. Simultaneous RNAi-mediated knockdown of mdf-1 causes embryonic lethality and severe chromosome segregation defects.</text>
</comment>
<comment type="similarity">
    <text evidence="4">Belongs to the nucleoporin Nup84/Nup107 family.</text>
</comment>
<evidence type="ECO:0000250" key="1">
    <source>
        <dbReference type="UniProtKB" id="P57740"/>
    </source>
</evidence>
<evidence type="ECO:0000269" key="2">
    <source>
    </source>
</evidence>
<evidence type="ECO:0000269" key="3">
    <source>
    </source>
</evidence>
<evidence type="ECO:0000305" key="4"/>
<evidence type="ECO:0000312" key="5">
    <source>
        <dbReference type="Proteomes" id="UP000001940"/>
    </source>
</evidence>
<evidence type="ECO:0000312" key="6">
    <source>
        <dbReference type="WormBase" id="F07A11.3"/>
    </source>
</evidence>
<feature type="chain" id="PRO_0000440239" description="Nuclear pore complex protein 5" evidence="4">
    <location>
        <begin position="1"/>
        <end position="813"/>
    </location>
</feature>
<accession>Q19131</accession>
<keyword id="KW-0131">Cell cycle</keyword>
<keyword id="KW-0132">Cell division</keyword>
<keyword id="KW-0137">Centromere</keyword>
<keyword id="KW-0158">Chromosome</keyword>
<keyword id="KW-0159">Chromosome partition</keyword>
<keyword id="KW-0995">Kinetochore</keyword>
<keyword id="KW-0472">Membrane</keyword>
<keyword id="KW-0498">Mitosis</keyword>
<keyword id="KW-0509">mRNA transport</keyword>
<keyword id="KW-0906">Nuclear pore complex</keyword>
<keyword id="KW-0539">Nucleus</keyword>
<keyword id="KW-0653">Protein transport</keyword>
<keyword id="KW-1185">Reference proteome</keyword>
<keyword id="KW-0811">Translocation</keyword>
<keyword id="KW-0813">Transport</keyword>
<dbReference type="EMBL" id="BX284602">
    <property type="protein sequence ID" value="CAA91316.1"/>
    <property type="molecule type" value="Genomic_DNA"/>
</dbReference>
<dbReference type="PIR" id="T20527">
    <property type="entry name" value="T20527"/>
</dbReference>
<dbReference type="RefSeq" id="NP_496481.1">
    <property type="nucleotide sequence ID" value="NM_064080.6"/>
</dbReference>
<dbReference type="SMR" id="Q19131"/>
<dbReference type="DIP" id="DIP-25365N"/>
<dbReference type="FunCoup" id="Q19131">
    <property type="interactions" value="203"/>
</dbReference>
<dbReference type="STRING" id="6239.F07A11.3.1"/>
<dbReference type="PaxDb" id="6239-F07A11.3"/>
<dbReference type="PeptideAtlas" id="Q19131"/>
<dbReference type="EnsemblMetazoa" id="F07A11.3.1">
    <property type="protein sequence ID" value="F07A11.3.1"/>
    <property type="gene ID" value="WBGene00003791"/>
</dbReference>
<dbReference type="GeneID" id="174779"/>
<dbReference type="KEGG" id="cel:CELE_F07A11.3"/>
<dbReference type="UCSC" id="F07A11.3">
    <property type="organism name" value="c. elegans"/>
</dbReference>
<dbReference type="AGR" id="WB:WBGene00003791"/>
<dbReference type="CTD" id="174779"/>
<dbReference type="WormBase" id="F07A11.3">
    <property type="protein sequence ID" value="CE03145"/>
    <property type="gene ID" value="WBGene00003791"/>
    <property type="gene designation" value="npp-5"/>
</dbReference>
<dbReference type="eggNOG" id="KOG1964">
    <property type="taxonomic scope" value="Eukaryota"/>
</dbReference>
<dbReference type="GeneTree" id="ENSGT00390000012080"/>
<dbReference type="HOGENOM" id="CLU_347244_0_0_1"/>
<dbReference type="InParanoid" id="Q19131"/>
<dbReference type="OMA" id="WAYANSA"/>
<dbReference type="OrthoDB" id="5785091at2759"/>
<dbReference type="Reactome" id="R-CEL-9615933">
    <property type="pathway name" value="Postmitotic nuclear pore complex (NPC) reformation"/>
</dbReference>
<dbReference type="PRO" id="PR:Q19131"/>
<dbReference type="Proteomes" id="UP000001940">
    <property type="component" value="Chromosome II"/>
</dbReference>
<dbReference type="Bgee" id="WBGene00003791">
    <property type="expression patterns" value="Expressed in germ line (C elegans) and 4 other cell types or tissues"/>
</dbReference>
<dbReference type="GO" id="GO:0000776">
    <property type="term" value="C:kinetochore"/>
    <property type="evidence" value="ECO:0007669"/>
    <property type="project" value="UniProtKB-KW"/>
</dbReference>
<dbReference type="GO" id="GO:0031965">
    <property type="term" value="C:nuclear membrane"/>
    <property type="evidence" value="ECO:0000315"/>
    <property type="project" value="UniProtKB"/>
</dbReference>
<dbReference type="GO" id="GO:0005643">
    <property type="term" value="C:nuclear pore"/>
    <property type="evidence" value="ECO:0000314"/>
    <property type="project" value="UniProtKB"/>
</dbReference>
<dbReference type="GO" id="GO:0031080">
    <property type="term" value="C:nuclear pore outer ring"/>
    <property type="evidence" value="ECO:0000318"/>
    <property type="project" value="GO_Central"/>
</dbReference>
<dbReference type="GO" id="GO:0017056">
    <property type="term" value="F:structural constituent of nuclear pore"/>
    <property type="evidence" value="ECO:0000318"/>
    <property type="project" value="GO_Central"/>
</dbReference>
<dbReference type="GO" id="GO:0051301">
    <property type="term" value="P:cell division"/>
    <property type="evidence" value="ECO:0007669"/>
    <property type="project" value="UniProtKB-KW"/>
</dbReference>
<dbReference type="GO" id="GO:0007059">
    <property type="term" value="P:chromosome segregation"/>
    <property type="evidence" value="ECO:0007669"/>
    <property type="project" value="UniProtKB-KW"/>
</dbReference>
<dbReference type="GO" id="GO:0051382">
    <property type="term" value="P:kinetochore assembly"/>
    <property type="evidence" value="ECO:0000315"/>
    <property type="project" value="UniProtKB"/>
</dbReference>
<dbReference type="GO" id="GO:0006406">
    <property type="term" value="P:mRNA export from nucleus"/>
    <property type="evidence" value="ECO:0000318"/>
    <property type="project" value="GO_Central"/>
</dbReference>
<dbReference type="GO" id="GO:0002119">
    <property type="term" value="P:nematode larval development"/>
    <property type="evidence" value="ECO:0000315"/>
    <property type="project" value="UniProtKB"/>
</dbReference>
<dbReference type="GO" id="GO:0000973">
    <property type="term" value="P:post-transcriptional tethering of RNA polymerase II gene DNA at nuclear periphery"/>
    <property type="evidence" value="ECO:0000318"/>
    <property type="project" value="GO_Central"/>
</dbReference>
<dbReference type="GO" id="GO:0006606">
    <property type="term" value="P:protein import into nucleus"/>
    <property type="evidence" value="ECO:0000318"/>
    <property type="project" value="GO_Central"/>
</dbReference>
<dbReference type="GO" id="GO:0008104">
    <property type="term" value="P:protein localization"/>
    <property type="evidence" value="ECO:0000315"/>
    <property type="project" value="UniProtKB"/>
</dbReference>
<dbReference type="GO" id="GO:0034501">
    <property type="term" value="P:protein localization to kinetochore"/>
    <property type="evidence" value="ECO:0000315"/>
    <property type="project" value="UniProtKB"/>
</dbReference>
<dbReference type="GO" id="GO:1900037">
    <property type="term" value="P:regulation of cellular response to hypoxia"/>
    <property type="evidence" value="ECO:0000315"/>
    <property type="project" value="UniProtKB"/>
</dbReference>
<dbReference type="GO" id="GO:0010965">
    <property type="term" value="P:regulation of mitotic sister chromatid separation"/>
    <property type="evidence" value="ECO:0000315"/>
    <property type="project" value="UniProtKB"/>
</dbReference>
<dbReference type="GO" id="GO:0097298">
    <property type="term" value="P:regulation of nucleus size"/>
    <property type="evidence" value="ECO:0000315"/>
    <property type="project" value="UniProtKB"/>
</dbReference>
<dbReference type="InterPro" id="IPR007252">
    <property type="entry name" value="Nup84/Nup107"/>
</dbReference>
<dbReference type="PANTHER" id="PTHR13003:SF2">
    <property type="entry name" value="NUCLEAR PORE COMPLEX PROTEIN NUP107"/>
    <property type="match status" value="1"/>
</dbReference>
<dbReference type="PANTHER" id="PTHR13003">
    <property type="entry name" value="NUP107-RELATED"/>
    <property type="match status" value="1"/>
</dbReference>
<dbReference type="Pfam" id="PF04121">
    <property type="entry name" value="Nup84_Nup100"/>
    <property type="match status" value="1"/>
</dbReference>
<reference evidence="5" key="1">
    <citation type="journal article" date="1998" name="Science">
        <title>Genome sequence of the nematode C. elegans: a platform for investigating biology.</title>
        <authorList>
            <consortium name="The C. elegans sequencing consortium"/>
        </authorList>
    </citation>
    <scope>NUCLEOTIDE SEQUENCE [LARGE SCALE GENOMIC DNA]</scope>
    <source>
        <strain evidence="5">Bristol N2</strain>
    </source>
</reference>
<reference evidence="4" key="2">
    <citation type="journal article" date="2009" name="Cell">
        <title>Age-dependent deterioration of nuclear pore complexes causes a loss of nuclear integrity in postmitotic cells.</title>
        <authorList>
            <person name="D'Angelo M.A."/>
            <person name="Raices M."/>
            <person name="Panowski S.H."/>
            <person name="Hetzer M.W."/>
        </authorList>
    </citation>
    <scope>DEVELOPMENTAL STAGE</scope>
</reference>
<reference evidence="4" key="3">
    <citation type="journal article" date="2012" name="Mol. Biol. Cell">
        <title>Dissection of the NUP107 nuclear pore subcomplex reveals a novel interaction with spindle assembly checkpoint protein MAD1 in Caenorhabditis elegans.</title>
        <authorList>
            <person name="Rodenas E."/>
            <person name="Gonzalez-Aguilera C."/>
            <person name="Ayuso C."/>
            <person name="Askjaer P."/>
        </authorList>
    </citation>
    <scope>FUNCTION</scope>
    <scope>INTERACTION WITH MDF-1</scope>
    <scope>SUBCELLULAR LOCATION</scope>
    <scope>DEVELOPMENTAL STAGE</scope>
    <scope>DISRUPTION PHENOTYPE</scope>
</reference>
<proteinExistence type="evidence at protein level"/>
<gene>
    <name evidence="6" type="primary">npp-5</name>
    <name evidence="6" type="ORF">F07A11.3</name>
</gene>
<protein>
    <recommendedName>
        <fullName evidence="6">Nuclear pore complex protein 5</fullName>
    </recommendedName>
    <alternativeName>
        <fullName evidence="4">Nuclear pore complex protein Nup107</fullName>
    </alternativeName>
    <alternativeName>
        <fullName evidence="4">Nucleoporin npp-5</fullName>
    </alternativeName>
</protein>